<accession>Q9FGT7</accession>
<accession>F4KDI4</accession>
<gene>
    <name type="primary">ARR18</name>
    <name type="ordered locus">At5g58080</name>
    <name type="ORF">K21L19.7</name>
</gene>
<reference key="1">
    <citation type="journal article" date="2000" name="DNA Res.">
        <title>Structural analysis of Arabidopsis thaliana chromosome 5. X. Sequence features of the regions of 3,076,755 bp covered by sixty P1 and TAC clones.</title>
        <authorList>
            <person name="Sato S."/>
            <person name="Nakamura Y."/>
            <person name="Kaneko T."/>
            <person name="Katoh T."/>
            <person name="Asamizu E."/>
            <person name="Kotani H."/>
            <person name="Tabata S."/>
        </authorList>
    </citation>
    <scope>NUCLEOTIDE SEQUENCE [LARGE SCALE GENOMIC DNA]</scope>
    <source>
        <strain>cv. Columbia</strain>
    </source>
</reference>
<reference key="2">
    <citation type="journal article" date="2017" name="Plant J.">
        <title>Araport11: a complete reannotation of the Arabidopsis thaliana reference genome.</title>
        <authorList>
            <person name="Cheng C.Y."/>
            <person name="Krishnakumar V."/>
            <person name="Chan A.P."/>
            <person name="Thibaud-Nissen F."/>
            <person name="Schobel S."/>
            <person name="Town C.D."/>
        </authorList>
    </citation>
    <scope>GENOME REANNOTATION</scope>
    <source>
        <strain>cv. Columbia</strain>
    </source>
</reference>
<reference key="3">
    <citation type="journal article" date="2004" name="Plant Physiol.">
        <title>Type-B response regulators display overlapping expression patterns in Arabidopsis.</title>
        <authorList>
            <person name="Mason M.G."/>
            <person name="Li J."/>
            <person name="Mathews D.E."/>
            <person name="Kieber J.J."/>
            <person name="Schaller G.E."/>
        </authorList>
    </citation>
    <scope>TISSUE SPECIFICITY</scope>
</reference>
<feature type="chain" id="PRO_0000132300" description="Two-component response regulator ARR18">
    <location>
        <begin position="1"/>
        <end position="635"/>
    </location>
</feature>
<feature type="domain" description="Response regulatory" evidence="3">
    <location>
        <begin position="19"/>
        <end position="133"/>
    </location>
</feature>
<feature type="DNA-binding region" description="Myb-like GARP" evidence="4">
    <location>
        <begin position="196"/>
        <end position="246"/>
    </location>
</feature>
<feature type="region of interest" description="Disordered" evidence="5">
    <location>
        <begin position="144"/>
        <end position="196"/>
    </location>
</feature>
<feature type="region of interest" description="Disordered" evidence="5">
    <location>
        <begin position="323"/>
        <end position="342"/>
    </location>
</feature>
<feature type="short sequence motif" description="Nuclear localization signal" evidence="2">
    <location>
        <begin position="193"/>
        <end position="196"/>
    </location>
</feature>
<feature type="compositionally biased region" description="Acidic residues" evidence="5">
    <location>
        <begin position="166"/>
        <end position="186"/>
    </location>
</feature>
<feature type="modified residue" description="4-aspartylphosphate" evidence="3">
    <location>
        <position position="70"/>
    </location>
</feature>
<evidence type="ECO:0000250" key="1"/>
<evidence type="ECO:0000255" key="2"/>
<evidence type="ECO:0000255" key="3">
    <source>
        <dbReference type="PROSITE-ProRule" id="PRU00169"/>
    </source>
</evidence>
<evidence type="ECO:0000255" key="4">
    <source>
        <dbReference type="PROSITE-ProRule" id="PRU00625"/>
    </source>
</evidence>
<evidence type="ECO:0000256" key="5">
    <source>
        <dbReference type="SAM" id="MobiDB-lite"/>
    </source>
</evidence>
<evidence type="ECO:0000269" key="6">
    <source>
    </source>
</evidence>
<evidence type="ECO:0000305" key="7"/>
<sequence length="635" mass="70407">MEFGSTEDGRHDKFPVGMRVLAVDDNPTCLRKLEELLLRCKYHVTKTMESRKALEMLRENSNMFDLVISDVEMPDTDGFKLLEIGLEMDLPVIMLSAHSDYDSVMKGIIHGACDYLVKPVGLKELQNIWHHVVKKNIKSYAKLLPPSESDSVPSASRKRKDKVNDSGDEDDSDREEDDGEGSEQDGDGSGTRKKPRVVWSQELHQKFVSAVQQLGLDKAVPKKILDLMSIEGLTRENVASHLQKYRLYLKKIDEGQQQNMTPDAFGTRDSSYFQMAQLDGLRDFTAARQIPSSGLLSRSHLTKLQPPMYSSINLQGMNSSSFIQQGHHQNSSNSANPFGTYHSTLSPRIQNVNLFQRTSSPLEPLQFPRSKSYIGDFKGLGDRAIGGSFLDTCMPFGSSSTSLPSASTNPLMLQANYTQPLHIASDGIQPCIEGTPSNSASPNISFQGLSRFPGHSWQGNLNTTRFPPSSLPLNLAFLPDQVTCAGNNLGDCTSLVSAENPGGEMQCDPQLLGGFMQNVNPLGGQKWEQQNCTMLNNPFGNIEYPLPADNMVFRDNNSTRSKGLDESLMNPIDNSQEYVGKATTMLDPEMKSGKPENDNQHDVFDDIMNEMMKQEENNGMVPVATRFGFDSFPPP</sequence>
<protein>
    <recommendedName>
        <fullName>Two-component response regulator ARR18</fullName>
    </recommendedName>
</protein>
<comment type="function">
    <text evidence="1">Transcriptional activator that binds specifically to the DNA sequence 5'-[AG]GATT-3'. Functions as a response regulator involved in His-to-Asp phosphorelay signal transduction system. Phosphorylation of the Asp residue in the receiver domain activates the ability of the protein to promote the transcription of target genes. Could directly activate some type-A response regulators in response to cytokinins (By similarity).</text>
</comment>
<comment type="subunit">
    <text evidence="1">Binds the target DNA as a monomer.</text>
</comment>
<comment type="subcellular location">
    <subcellularLocation>
        <location>Nucleus</location>
    </subcellularLocation>
</comment>
<comment type="tissue specificity">
    <text evidence="6">Predominantly expressed in young leaf tissue developing anthers, and siliques.</text>
</comment>
<comment type="PTM">
    <text>Two-component system major event consists of a His-to-Asp phosphorelay between a sensor histidine kinase (HK) and a response regulator (RR). In plants, the His-to-Asp phosphorelay involves an additional intermediate named Histidine-containing phosphotransfer protein (HPt). This multistep phosphorelay consists of a His-Asp-His-Asp sequential transfer of a phosphate group between first a His and an Asp of the HK protein, followed by the transfer to a conserved His of the HPt protein and finally the transfer to an Asp in the receiver domain of the RR protein.</text>
</comment>
<comment type="similarity">
    <text evidence="7">Belongs to the ARR family. Type-B subfamily.</text>
</comment>
<comment type="sequence caution" evidence="7">
    <conflict type="erroneous gene model prediction">
        <sequence resource="EMBL-CDS" id="BAB10999"/>
    </conflict>
</comment>
<keyword id="KW-0010">Activator</keyword>
<keyword id="KW-0932">Cytokinin signaling pathway</keyword>
<keyword id="KW-0238">DNA-binding</keyword>
<keyword id="KW-0539">Nucleus</keyword>
<keyword id="KW-0597">Phosphoprotein</keyword>
<keyword id="KW-1185">Reference proteome</keyword>
<keyword id="KW-0804">Transcription</keyword>
<keyword id="KW-0805">Transcription regulation</keyword>
<keyword id="KW-0902">Two-component regulatory system</keyword>
<proteinExistence type="evidence at transcript level"/>
<name>ARR18_ARATH</name>
<organism>
    <name type="scientific">Arabidopsis thaliana</name>
    <name type="common">Mouse-ear cress</name>
    <dbReference type="NCBI Taxonomy" id="3702"/>
    <lineage>
        <taxon>Eukaryota</taxon>
        <taxon>Viridiplantae</taxon>
        <taxon>Streptophyta</taxon>
        <taxon>Embryophyta</taxon>
        <taxon>Tracheophyta</taxon>
        <taxon>Spermatophyta</taxon>
        <taxon>Magnoliopsida</taxon>
        <taxon>eudicotyledons</taxon>
        <taxon>Gunneridae</taxon>
        <taxon>Pentapetalae</taxon>
        <taxon>rosids</taxon>
        <taxon>malvids</taxon>
        <taxon>Brassicales</taxon>
        <taxon>Brassicaceae</taxon>
        <taxon>Camelineae</taxon>
        <taxon>Arabidopsis</taxon>
    </lineage>
</organism>
<dbReference type="EMBL" id="AB024029">
    <property type="protein sequence ID" value="BAB10999.1"/>
    <property type="status" value="ALT_SEQ"/>
    <property type="molecule type" value="Genomic_DNA"/>
</dbReference>
<dbReference type="EMBL" id="CP002688">
    <property type="protein sequence ID" value="AED96995.2"/>
    <property type="molecule type" value="Genomic_DNA"/>
</dbReference>
<dbReference type="RefSeq" id="NP_200616.4">
    <property type="nucleotide sequence ID" value="NM_125193.4"/>
</dbReference>
<dbReference type="SMR" id="Q9FGT7"/>
<dbReference type="BioGRID" id="21164">
    <property type="interactions" value="4"/>
</dbReference>
<dbReference type="FunCoup" id="Q9FGT7">
    <property type="interactions" value="293"/>
</dbReference>
<dbReference type="STRING" id="3702.Q9FGT7"/>
<dbReference type="iPTMnet" id="Q9FGT7"/>
<dbReference type="PaxDb" id="3702-AT5G58080.1"/>
<dbReference type="ProteomicsDB" id="246931"/>
<dbReference type="EnsemblPlants" id="AT5G58080.1">
    <property type="protein sequence ID" value="AT5G58080.1"/>
    <property type="gene ID" value="AT5G58080"/>
</dbReference>
<dbReference type="GeneID" id="835920"/>
<dbReference type="Gramene" id="AT5G58080.1">
    <property type="protein sequence ID" value="AT5G58080.1"/>
    <property type="gene ID" value="AT5G58080"/>
</dbReference>
<dbReference type="KEGG" id="ath:AT5G58080"/>
<dbReference type="Araport" id="AT5G58080"/>
<dbReference type="TAIR" id="AT5G58080">
    <property type="gene designation" value="RR18"/>
</dbReference>
<dbReference type="eggNOG" id="KOG1601">
    <property type="taxonomic scope" value="Eukaryota"/>
</dbReference>
<dbReference type="HOGENOM" id="CLU_024359_0_0_1"/>
<dbReference type="InParanoid" id="Q9FGT7"/>
<dbReference type="OMA" id="ENSNMFD"/>
<dbReference type="PhylomeDB" id="Q9FGT7"/>
<dbReference type="PRO" id="PR:Q9FGT7"/>
<dbReference type="Proteomes" id="UP000006548">
    <property type="component" value="Chromosome 5"/>
</dbReference>
<dbReference type="ExpressionAtlas" id="Q9FGT7">
    <property type="expression patterns" value="baseline and differential"/>
</dbReference>
<dbReference type="GO" id="GO:0005634">
    <property type="term" value="C:nucleus"/>
    <property type="evidence" value="ECO:0007669"/>
    <property type="project" value="UniProtKB-SubCell"/>
</dbReference>
<dbReference type="GO" id="GO:0003677">
    <property type="term" value="F:DNA binding"/>
    <property type="evidence" value="ECO:0007669"/>
    <property type="project" value="UniProtKB-KW"/>
</dbReference>
<dbReference type="GO" id="GO:0003700">
    <property type="term" value="F:DNA-binding transcription factor activity"/>
    <property type="evidence" value="ECO:0007669"/>
    <property type="project" value="InterPro"/>
</dbReference>
<dbReference type="GO" id="GO:0009736">
    <property type="term" value="P:cytokinin-activated signaling pathway"/>
    <property type="evidence" value="ECO:0007669"/>
    <property type="project" value="UniProtKB-KW"/>
</dbReference>
<dbReference type="GO" id="GO:0000160">
    <property type="term" value="P:phosphorelay signal transduction system"/>
    <property type="evidence" value="ECO:0007669"/>
    <property type="project" value="UniProtKB-KW"/>
</dbReference>
<dbReference type="CDD" id="cd17584">
    <property type="entry name" value="REC_typeB_ARR-like"/>
    <property type="match status" value="1"/>
</dbReference>
<dbReference type="FunFam" id="1.10.10.60:FF:000007">
    <property type="entry name" value="Two-component response regulator"/>
    <property type="match status" value="1"/>
</dbReference>
<dbReference type="Gene3D" id="3.40.50.2300">
    <property type="match status" value="1"/>
</dbReference>
<dbReference type="Gene3D" id="1.10.10.60">
    <property type="entry name" value="Homeodomain-like"/>
    <property type="match status" value="1"/>
</dbReference>
<dbReference type="InterPro" id="IPR045279">
    <property type="entry name" value="ARR-like"/>
</dbReference>
<dbReference type="InterPro" id="IPR011006">
    <property type="entry name" value="CheY-like_superfamily"/>
</dbReference>
<dbReference type="InterPro" id="IPR009057">
    <property type="entry name" value="Homeodomain-like_sf"/>
</dbReference>
<dbReference type="InterPro" id="IPR017930">
    <property type="entry name" value="Myb_dom"/>
</dbReference>
<dbReference type="InterPro" id="IPR006447">
    <property type="entry name" value="Myb_dom_plants"/>
</dbReference>
<dbReference type="InterPro" id="IPR017053">
    <property type="entry name" value="Response_reg_B-typ_pln"/>
</dbReference>
<dbReference type="InterPro" id="IPR001005">
    <property type="entry name" value="SANT/Myb"/>
</dbReference>
<dbReference type="InterPro" id="IPR001789">
    <property type="entry name" value="Sig_transdc_resp-reg_receiver"/>
</dbReference>
<dbReference type="NCBIfam" id="TIGR01557">
    <property type="entry name" value="myb_SHAQKYF"/>
    <property type="match status" value="1"/>
</dbReference>
<dbReference type="PANTHER" id="PTHR43874">
    <property type="entry name" value="TWO-COMPONENT RESPONSE REGULATOR"/>
    <property type="match status" value="1"/>
</dbReference>
<dbReference type="PANTHER" id="PTHR43874:SF208">
    <property type="entry name" value="TWO-COMPONENT RESPONSE REGULATOR ARR18"/>
    <property type="match status" value="1"/>
</dbReference>
<dbReference type="Pfam" id="PF00249">
    <property type="entry name" value="Myb_DNA-binding"/>
    <property type="match status" value="1"/>
</dbReference>
<dbReference type="Pfam" id="PF00072">
    <property type="entry name" value="Response_reg"/>
    <property type="match status" value="1"/>
</dbReference>
<dbReference type="PIRSF" id="PIRSF036392">
    <property type="entry name" value="RR_ARR_type-B"/>
    <property type="match status" value="1"/>
</dbReference>
<dbReference type="SMART" id="SM00448">
    <property type="entry name" value="REC"/>
    <property type="match status" value="1"/>
</dbReference>
<dbReference type="SUPFAM" id="SSF52172">
    <property type="entry name" value="CheY-like"/>
    <property type="match status" value="1"/>
</dbReference>
<dbReference type="SUPFAM" id="SSF46689">
    <property type="entry name" value="Homeodomain-like"/>
    <property type="match status" value="1"/>
</dbReference>
<dbReference type="PROSITE" id="PS51294">
    <property type="entry name" value="HTH_MYB"/>
    <property type="match status" value="1"/>
</dbReference>
<dbReference type="PROSITE" id="PS50110">
    <property type="entry name" value="RESPONSE_REGULATORY"/>
    <property type="match status" value="1"/>
</dbReference>